<keyword id="KW-0027">Amidation</keyword>
<keyword id="KW-0903">Direct protein sequencing</keyword>
<keyword id="KW-0527">Neuropeptide</keyword>
<keyword id="KW-0964">Secreted</keyword>
<proteinExistence type="evidence at protein level"/>
<accession>P86680</accession>
<sequence length="11" mass="1103">GASGLISFPRV</sequence>
<reference evidence="6" key="1">
    <citation type="journal article" date="2010" name="Peptides">
        <title>CAPA-peptides of praying mantids (Mantodea).</title>
        <authorList>
            <person name="Koehler R."/>
            <person name="Predel R."/>
        </authorList>
    </citation>
    <scope>PROTEIN SEQUENCE</scope>
    <scope>MASS SPECTROMETRY</scope>
    <scope>AMIDATION AT VAL-11</scope>
    <source>
        <tissue evidence="4">Abdominal perisympathetic organs</tissue>
    </source>
</reference>
<evidence type="ECO:0000250" key="1">
    <source>
        <dbReference type="UniProtKB" id="P83923"/>
    </source>
</evidence>
<evidence type="ECO:0000250" key="2">
    <source>
        <dbReference type="UniProtKB" id="P84375"/>
    </source>
</evidence>
<evidence type="ECO:0000255" key="3"/>
<evidence type="ECO:0000269" key="4">
    <source>
    </source>
</evidence>
<evidence type="ECO:0000303" key="5">
    <source>
    </source>
</evidence>
<evidence type="ECO:0000305" key="6"/>
<organism>
    <name type="scientific">Dystacta alticeps</name>
    <name type="common">Praying mantis</name>
    <dbReference type="NCBI Taxonomy" id="444697"/>
    <lineage>
        <taxon>Eukaryota</taxon>
        <taxon>Metazoa</taxon>
        <taxon>Ecdysozoa</taxon>
        <taxon>Arthropoda</taxon>
        <taxon>Hexapoda</taxon>
        <taxon>Insecta</taxon>
        <taxon>Pterygota</taxon>
        <taxon>Neoptera</taxon>
        <taxon>Polyneoptera</taxon>
        <taxon>Dictyoptera</taxon>
        <taxon>Mantodea</taxon>
        <taxon>Eumantodea</taxon>
        <taxon>Mantoidea</taxon>
        <taxon>Mantidae</taxon>
        <taxon>Dystactinae</taxon>
        <taxon>Dystacta</taxon>
    </lineage>
</organism>
<comment type="function">
    <text evidence="1">Mediates visceral muscle contractile activity (myotropic activity).</text>
</comment>
<comment type="subcellular location">
    <subcellularLocation>
        <location evidence="2">Secreted</location>
    </subcellularLocation>
</comment>
<comment type="mass spectrometry" mass="1102.6" method="MALDI" evidence="4"/>
<comment type="similarity">
    <text evidence="3">Belongs to the periviscerokinin family.</text>
</comment>
<feature type="peptide" id="PRO_0000395583" description="Periviscerokinin-2" evidence="4">
    <location>
        <begin position="1"/>
        <end position="11"/>
    </location>
</feature>
<feature type="modified residue" description="Valine amide" evidence="4">
    <location>
        <position position="11"/>
    </location>
</feature>
<feature type="unsure residue" description="L or I" evidence="4">
    <location>
        <position position="5"/>
    </location>
</feature>
<feature type="unsure residue" description="I or L" evidence="4">
    <location>
        <position position="6"/>
    </location>
</feature>
<name>PVK2_DYSAL</name>
<dbReference type="GO" id="GO:0005576">
    <property type="term" value="C:extracellular region"/>
    <property type="evidence" value="ECO:0007669"/>
    <property type="project" value="UniProtKB-SubCell"/>
</dbReference>
<dbReference type="GO" id="GO:0007218">
    <property type="term" value="P:neuropeptide signaling pathway"/>
    <property type="evidence" value="ECO:0007669"/>
    <property type="project" value="UniProtKB-KW"/>
</dbReference>
<dbReference type="InterPro" id="IPR013231">
    <property type="entry name" value="Periviscerokinin"/>
</dbReference>
<dbReference type="Pfam" id="PF08259">
    <property type="entry name" value="Periviscerokin"/>
    <property type="match status" value="1"/>
</dbReference>
<protein>
    <recommendedName>
        <fullName evidence="5">Periviscerokinin-2</fullName>
    </recommendedName>
</protein>